<gene>
    <name type="primary">Relb</name>
</gene>
<reference key="1">
    <citation type="journal article" date="1992" name="Mol. Cell. Biol.">
        <title>RelB, a new Rel family transcription activator that can interact with p50-NF-kappa B.</title>
        <authorList>
            <person name="Ryseck R.P."/>
            <person name="Bull P."/>
            <person name="Takamiya M."/>
            <person name="Bours V."/>
            <person name="Siebenlist U."/>
            <person name="Dobrzanski P."/>
            <person name="Bravo R."/>
        </authorList>
    </citation>
    <scope>NUCLEOTIDE SEQUENCE [MRNA]</scope>
</reference>
<reference key="2">
    <citation type="journal article" date="2005" name="Science">
        <title>The transcriptional landscape of the mammalian genome.</title>
        <authorList>
            <person name="Carninci P."/>
            <person name="Kasukawa T."/>
            <person name="Katayama S."/>
            <person name="Gough J."/>
            <person name="Frith M.C."/>
            <person name="Maeda N."/>
            <person name="Oyama R."/>
            <person name="Ravasi T."/>
            <person name="Lenhard B."/>
            <person name="Wells C."/>
            <person name="Kodzius R."/>
            <person name="Shimokawa K."/>
            <person name="Bajic V.B."/>
            <person name="Brenner S.E."/>
            <person name="Batalov S."/>
            <person name="Forrest A.R."/>
            <person name="Zavolan M."/>
            <person name="Davis M.J."/>
            <person name="Wilming L.G."/>
            <person name="Aidinis V."/>
            <person name="Allen J.E."/>
            <person name="Ambesi-Impiombato A."/>
            <person name="Apweiler R."/>
            <person name="Aturaliya R.N."/>
            <person name="Bailey T.L."/>
            <person name="Bansal M."/>
            <person name="Baxter L."/>
            <person name="Beisel K.W."/>
            <person name="Bersano T."/>
            <person name="Bono H."/>
            <person name="Chalk A.M."/>
            <person name="Chiu K.P."/>
            <person name="Choudhary V."/>
            <person name="Christoffels A."/>
            <person name="Clutterbuck D.R."/>
            <person name="Crowe M.L."/>
            <person name="Dalla E."/>
            <person name="Dalrymple B.P."/>
            <person name="de Bono B."/>
            <person name="Della Gatta G."/>
            <person name="di Bernardo D."/>
            <person name="Down T."/>
            <person name="Engstrom P."/>
            <person name="Fagiolini M."/>
            <person name="Faulkner G."/>
            <person name="Fletcher C.F."/>
            <person name="Fukushima T."/>
            <person name="Furuno M."/>
            <person name="Futaki S."/>
            <person name="Gariboldi M."/>
            <person name="Georgii-Hemming P."/>
            <person name="Gingeras T.R."/>
            <person name="Gojobori T."/>
            <person name="Green R.E."/>
            <person name="Gustincich S."/>
            <person name="Harbers M."/>
            <person name="Hayashi Y."/>
            <person name="Hensch T.K."/>
            <person name="Hirokawa N."/>
            <person name="Hill D."/>
            <person name="Huminiecki L."/>
            <person name="Iacono M."/>
            <person name="Ikeo K."/>
            <person name="Iwama A."/>
            <person name="Ishikawa T."/>
            <person name="Jakt M."/>
            <person name="Kanapin A."/>
            <person name="Katoh M."/>
            <person name="Kawasawa Y."/>
            <person name="Kelso J."/>
            <person name="Kitamura H."/>
            <person name="Kitano H."/>
            <person name="Kollias G."/>
            <person name="Krishnan S.P."/>
            <person name="Kruger A."/>
            <person name="Kummerfeld S.K."/>
            <person name="Kurochkin I.V."/>
            <person name="Lareau L.F."/>
            <person name="Lazarevic D."/>
            <person name="Lipovich L."/>
            <person name="Liu J."/>
            <person name="Liuni S."/>
            <person name="McWilliam S."/>
            <person name="Madan Babu M."/>
            <person name="Madera M."/>
            <person name="Marchionni L."/>
            <person name="Matsuda H."/>
            <person name="Matsuzawa S."/>
            <person name="Miki H."/>
            <person name="Mignone F."/>
            <person name="Miyake S."/>
            <person name="Morris K."/>
            <person name="Mottagui-Tabar S."/>
            <person name="Mulder N."/>
            <person name="Nakano N."/>
            <person name="Nakauchi H."/>
            <person name="Ng P."/>
            <person name="Nilsson R."/>
            <person name="Nishiguchi S."/>
            <person name="Nishikawa S."/>
            <person name="Nori F."/>
            <person name="Ohara O."/>
            <person name="Okazaki Y."/>
            <person name="Orlando V."/>
            <person name="Pang K.C."/>
            <person name="Pavan W.J."/>
            <person name="Pavesi G."/>
            <person name="Pesole G."/>
            <person name="Petrovsky N."/>
            <person name="Piazza S."/>
            <person name="Reed J."/>
            <person name="Reid J.F."/>
            <person name="Ring B.Z."/>
            <person name="Ringwald M."/>
            <person name="Rost B."/>
            <person name="Ruan Y."/>
            <person name="Salzberg S.L."/>
            <person name="Sandelin A."/>
            <person name="Schneider C."/>
            <person name="Schoenbach C."/>
            <person name="Sekiguchi K."/>
            <person name="Semple C.A."/>
            <person name="Seno S."/>
            <person name="Sessa L."/>
            <person name="Sheng Y."/>
            <person name="Shibata Y."/>
            <person name="Shimada H."/>
            <person name="Shimada K."/>
            <person name="Silva D."/>
            <person name="Sinclair B."/>
            <person name="Sperling S."/>
            <person name="Stupka E."/>
            <person name="Sugiura K."/>
            <person name="Sultana R."/>
            <person name="Takenaka Y."/>
            <person name="Taki K."/>
            <person name="Tammoja K."/>
            <person name="Tan S.L."/>
            <person name="Tang S."/>
            <person name="Taylor M.S."/>
            <person name="Tegner J."/>
            <person name="Teichmann S.A."/>
            <person name="Ueda H.R."/>
            <person name="van Nimwegen E."/>
            <person name="Verardo R."/>
            <person name="Wei C.L."/>
            <person name="Yagi K."/>
            <person name="Yamanishi H."/>
            <person name="Zabarovsky E."/>
            <person name="Zhu S."/>
            <person name="Zimmer A."/>
            <person name="Hide W."/>
            <person name="Bult C."/>
            <person name="Grimmond S.M."/>
            <person name="Teasdale R.D."/>
            <person name="Liu E.T."/>
            <person name="Brusic V."/>
            <person name="Quackenbush J."/>
            <person name="Wahlestedt C."/>
            <person name="Mattick J.S."/>
            <person name="Hume D.A."/>
            <person name="Kai C."/>
            <person name="Sasaki D."/>
            <person name="Tomaru Y."/>
            <person name="Fukuda S."/>
            <person name="Kanamori-Katayama M."/>
            <person name="Suzuki M."/>
            <person name="Aoki J."/>
            <person name="Arakawa T."/>
            <person name="Iida J."/>
            <person name="Imamura K."/>
            <person name="Itoh M."/>
            <person name="Kato T."/>
            <person name="Kawaji H."/>
            <person name="Kawagashira N."/>
            <person name="Kawashima T."/>
            <person name="Kojima M."/>
            <person name="Kondo S."/>
            <person name="Konno H."/>
            <person name="Nakano K."/>
            <person name="Ninomiya N."/>
            <person name="Nishio T."/>
            <person name="Okada M."/>
            <person name="Plessy C."/>
            <person name="Shibata K."/>
            <person name="Shiraki T."/>
            <person name="Suzuki S."/>
            <person name="Tagami M."/>
            <person name="Waki K."/>
            <person name="Watahiki A."/>
            <person name="Okamura-Oho Y."/>
            <person name="Suzuki H."/>
            <person name="Kawai J."/>
            <person name="Hayashizaki Y."/>
        </authorList>
    </citation>
    <scope>NUCLEOTIDE SEQUENCE [LARGE SCALE MRNA]</scope>
    <source>
        <strain>C57BL/6J</strain>
        <tissue>Kidney</tissue>
    </source>
</reference>
<reference key="3">
    <citation type="journal article" date="2004" name="Genome Res.">
        <title>The status, quality, and expansion of the NIH full-length cDNA project: the Mammalian Gene Collection (MGC).</title>
        <authorList>
            <consortium name="The MGC Project Team"/>
        </authorList>
    </citation>
    <scope>NUCLEOTIDE SEQUENCE [LARGE SCALE MRNA]</scope>
    <source>
        <strain>FVB/N</strain>
        <tissue>Mammary tumor</tissue>
    </source>
</reference>
<reference key="4">
    <citation type="journal article" date="1993" name="Mol. Cell. Biol.">
        <title>Both N- and C-terminal domains of RelB are required for full transactivation: role of the N-terminal leucine zipper-like motif.</title>
        <authorList>
            <person name="Dobrzanski P."/>
            <person name="Ryseck R.P."/>
            <person name="Bravo R."/>
        </authorList>
    </citation>
    <scope>NUCLEOTIDE SEQUENCE [MRNA] OF 1-116</scope>
</reference>
<reference key="5">
    <citation type="journal article" date="1995" name="Nature">
        <title>Expression of relB is required for the development of thymic medulla and dendritic cells.</title>
        <authorList>
            <person name="Burkly L."/>
            <person name="Hession C."/>
            <person name="Ogata L."/>
            <person name="Reilly C."/>
            <person name="Marconi L.A."/>
            <person name="Olson D."/>
            <person name="Tizard R."/>
            <person name="Cate R."/>
            <person name="Lo D."/>
        </authorList>
    </citation>
    <scope>NUCLEOTIDE SEQUENCE [GENOMIC DNA] OF 309-429</scope>
    <source>
        <strain>C57BL/6J</strain>
        <tissue>Liver</tissue>
    </source>
</reference>
<reference key="6">
    <citation type="journal article" date="2001" name="Oncogene">
        <title>Signal-specific and phosphorylation-dependent RelB degradation: a potential mechanism of NF-kappaB control.</title>
        <authorList>
            <person name="Marienfeld R."/>
            <person name="Berberich-Siebelt F."/>
            <person name="Berberich I."/>
            <person name="Denk A."/>
            <person name="Serfling E."/>
            <person name="Neumann M."/>
        </authorList>
    </citation>
    <scope>PHOSPHORYLATION AT THR-84 AND SER-552</scope>
</reference>
<reference key="7">
    <citation type="journal article" date="2002" name="Mol. Cell">
        <title>Peptide-induced negative selection of thymocytes activates transcription of an NF-kappa B inhibitor.</title>
        <authorList>
            <person name="Fiorini E."/>
            <person name="Schmitz I."/>
            <person name="Marissen W.E."/>
            <person name="Osborn S.L."/>
            <person name="Touma M."/>
            <person name="Sasada T."/>
            <person name="Reche P.A."/>
            <person name="Tibaldi E.V."/>
            <person name="Hussey R.E."/>
            <person name="Kruisbeek A.M."/>
            <person name="Reinherz E.L."/>
            <person name="Clayton L.K."/>
        </authorList>
    </citation>
    <scope>INTERACTION WITH NFKBID</scope>
</reference>
<reference key="8">
    <citation type="journal article" date="2003" name="J. Biol. Chem.">
        <title>Critical role of RelB serine 368 for dimerization and p100 stabilization.</title>
        <authorList>
            <person name="Maier H.J."/>
            <person name="Marienfeld R."/>
            <person name="Wirth T."/>
            <person name="Baumann B."/>
        </authorList>
    </citation>
    <scope>SELF-ASSOCIATION</scope>
    <scope>INTERACTION WITH NFKB1 AND NFKB2</scope>
    <scope>MUTAGENESIS OF SER-368</scope>
</reference>
<reference key="9">
    <citation type="journal article" date="2012" name="Cell Cycle">
        <title>The RelB subunit of NFkappaB acts as a negative regulator of circadian gene expression.</title>
        <authorList>
            <person name="Bellet M.M."/>
            <person name="Zocchi L."/>
            <person name="Sassone-Corsi P."/>
        </authorList>
    </citation>
    <scope>FUNCTION</scope>
    <scope>INTERACTION WITH BMAL1</scope>
</reference>
<reference key="10">
    <citation type="journal article" date="2012" name="J. Clin. Invest.">
        <title>Nuclear protein 1 promotes pancreatic cancer development and protects cells from stress by inhibiting apoptosis.</title>
        <authorList>
            <person name="Hamidi T."/>
            <person name="Algul H."/>
            <person name="Cano C.E."/>
            <person name="Sandi M.J."/>
            <person name="Molejon M.I."/>
            <person name="Riemann M."/>
            <person name="Calvo E.L."/>
            <person name="Lomberk G."/>
            <person name="Dagorn J.C."/>
            <person name="Weih F."/>
            <person name="Urrutia R."/>
            <person name="Schmid R.M."/>
            <person name="Iovanna J.L."/>
        </authorList>
    </citation>
    <scope>FUNCTION</scope>
</reference>
<reference key="11">
    <citation type="journal article" date="2005" name="Structure">
        <title>NF-kappaB RelB forms an intertwined homodimer.</title>
        <authorList>
            <person name="Huang D.B."/>
            <person name="Vu D."/>
            <person name="Ghosh G."/>
        </authorList>
    </citation>
    <scope>X-RAY CRYSTALLOGRAPHY (2.2 ANGSTROMS) OF 277-378</scope>
</reference>
<reference key="12">
    <citation type="journal article" date="2007" name="J. Mol. Biol.">
        <title>X-ray structure of a NF-kappaB p50/RelB/DNA complex reveals assembly of multiple dimers on tandem kappaB sites.</title>
        <authorList>
            <person name="Moorthy A.K."/>
            <person name="Huang D.B."/>
            <person name="Wang V.Y."/>
            <person name="Vu D."/>
            <person name="Ghosh G."/>
        </authorList>
    </citation>
    <scope>X-RAY CRYSTALLOGRAPHY (3.05 ANGSTROMS) OF 91-378 IN COMPLEX WITH NFKB1</scope>
</reference>
<name>RELB_MOUSE</name>
<organism>
    <name type="scientific">Mus musculus</name>
    <name type="common">Mouse</name>
    <dbReference type="NCBI Taxonomy" id="10090"/>
    <lineage>
        <taxon>Eukaryota</taxon>
        <taxon>Metazoa</taxon>
        <taxon>Chordata</taxon>
        <taxon>Craniata</taxon>
        <taxon>Vertebrata</taxon>
        <taxon>Euteleostomi</taxon>
        <taxon>Mammalia</taxon>
        <taxon>Eutheria</taxon>
        <taxon>Euarchontoglires</taxon>
        <taxon>Glires</taxon>
        <taxon>Rodentia</taxon>
        <taxon>Myomorpha</taxon>
        <taxon>Muroidea</taxon>
        <taxon>Muridae</taxon>
        <taxon>Murinae</taxon>
        <taxon>Mus</taxon>
        <taxon>Mus</taxon>
    </lineage>
</organism>
<comment type="function">
    <text evidence="2 10 11">NF-kappa-B is a pleiotropic transcription factor which is present in almost all cell types and is involved in many biological processed such as inflammation, immunity, differentiation, cell growth, tumorigenesis and apoptosis. NF-kappa-B is a homo- or heterodimeric complex formed by the Rel-like domain-containing proteins RELA/p65, RELB, NFKB1/p105, NFKB1/p50, REL and NFKB2/p52. The dimers bind at kappa-B sites in the DNA of their target genes and the individual dimers have distinct preferences for different kappa-B sites that they can bind with distinguishable affinity and specificity. Different dimer combinations act as transcriptional activators or repressors, respectively. NF-kappa-B is controlled by various mechanisms of post-translational modification and subcellular compartmentalization as well as by interactions with other cofactors or corepressors. NF-kappa-B complexes are held in the cytoplasm in an inactive state complexed with members of the NF-kappa-B inhibitor (I-kappa-B) family. In a conventional activation pathway, I-kappa-B is phosphorylated by I-kappa-B kinases (IKKs) in response to different activators, subsequently degraded thus liberating the active NF-kappa-B complex which translocates to the nucleus. NF-kappa-B heterodimeric RelB-p50 and RelB-p52 complexes are transcriptional activators. RELB neither associates with DNA nor with RELA/p65 or REL. Stimulates promoter activity in the presence of NFKB2/p49 (By similarity). As a member of the NUPR1/RELB/IER3 survival pathway, may allow the development of pancreatic intraepithelial neoplasias. Regulates the circadian clock by repressing the transcriptional activator activity of the CLOCK-BMAL1 heterodimer in a CRY1/CRY2 independent manner. Increased repression of the heterodimer is seen in the presence of NFKB2/p52. Is required for both T and B lymphocyte maturation and function (By similarity).</text>
</comment>
<comment type="subunit">
    <text evidence="1 7 8 9 11">Component of the NF-kappa-B RelB-p50 complex. Component of the NF-kappa-B RelB-p52 complex (By similarity). Self-associates; the interaction seems to be transient and may prevent degradation allowing for heterodimer formation p50 or p52. Interacts with NFKB1/p50, NFKB2/p52 and NFKB2/p100. Interacts with NFKBID. Interacts with BMAL1 and the interaction is enhanced in the presence of CLOCK.</text>
</comment>
<comment type="interaction">
    <interactant intactId="EBI-1209145">
        <id>Q04863</id>
    </interactant>
    <interactant intactId="EBI-1209141">
        <id>PRO_0000030313</id>
        <label>Nfkb1</label>
        <dbReference type="UniProtKB" id="P25799"/>
    </interactant>
    <organismsDiffer>false</organismsDiffer>
    <experiments>2</experiments>
</comment>
<comment type="interaction">
    <interactant intactId="EBI-1209145">
        <id>Q04863</id>
    </interactant>
    <interactant intactId="EBI-1209166">
        <id>Q9WTK5</id>
        <label>Nfkb2</label>
    </interactant>
    <organismsDiffer>false</organismsDiffer>
    <experiments>3</experiments>
</comment>
<comment type="interaction">
    <interactant intactId="EBI-1209145">
        <id>Q04863</id>
    </interactant>
    <interactant intactId="EBI-644427">
        <id>Q9Z1E3</id>
        <label>Nfkbia</label>
    </interactant>
    <organismsDiffer>false</organismsDiffer>
    <experiments>4</experiments>
</comment>
<comment type="interaction">
    <interactant intactId="EBI-1209145">
        <id>Q04863</id>
    </interactant>
    <interactant intactId="EBI-6688774">
        <id>O54910</id>
        <label>Nfkbie</label>
    </interactant>
    <organismsDiffer>false</organismsDiffer>
    <experiments>2</experiments>
</comment>
<comment type="interaction">
    <interactant intactId="EBI-1209145">
        <id>Q04863</id>
    </interactant>
    <interactant intactId="EBI-1209145">
        <id>Q04863</id>
        <label>Relb</label>
    </interactant>
    <organismsDiffer>false</organismsDiffer>
    <experiments>3</experiments>
</comment>
<comment type="subcellular location">
    <subcellularLocation>
        <location>Nucleus</location>
    </subcellularLocation>
    <subcellularLocation>
        <location evidence="1">Cytoplasm</location>
        <location evidence="1">Cytoskeleton</location>
        <location evidence="1">Microtubule organizing center</location>
        <location evidence="1">Centrosome</location>
    </subcellularLocation>
    <text evidence="1">Colocalizes with NEK6 in the centrosome.</text>
</comment>
<comment type="tissue specificity">
    <text>Expressed in intestine, thymus and spleen. Undetectable in liver, bome marrow, kidney and testis.</text>
</comment>
<comment type="domain">
    <text>Both N- and C-terminal domains are required for transcriptional activation.</text>
</comment>
<comment type="PTM">
    <text evidence="6">Phosphorylation at 'Thr-103' and 'Ser-573' is followed by proteasomal degradation.</text>
</comment>
<sequence length="558" mass="60305">MPSRRAARESAPELGALGSSDLSSLSLTVSRTTDELEIIDEYIKENGFGLDGTQLSEMPRLVPRGPASLSSVTLGPAAPPPPATPSWSCTLGRLVSPGPCPRPYLVITEQPKQRGMRFRYECEGRSAGSILGESSTEASKTLPAIELRDCGGLREVEVTACLVWKDWPHRVHPHSLVGKDCTDGVCRVRLRPHVSPRHSFNNLGIQCVRKKEIEAAIERKIQLGIDPYNAGSLKNHQEVDMNVVRICFQASYRDQQGHLHRMDPILSEPVYDKKSTNTSELRICRINKESGPCTGGEELYLLCDKVQKEDISVVFSTASWEGRADFSQADVHRQIAIVFKTPPYEDLEISEPVTVNVFLQRLTDGVCSEPLPFTYLPRDHDSYGVDKKRKRGLPDVLGELSSSDPHGIESKRRKKKPVFLDHFLPGHSSGLFLPPSALQPADSDFFPASISLPGLEPPGGPDLLDDGFAYDPSAPTLFTMLDLLPPAPPLASAVVGSGGAGATVVESSGPEPLSLDSFAAPGPGDVGTASLVGSNMFPNQYREAAFGGGLLSPGPEAT</sequence>
<feature type="chain" id="PRO_0000205174" description="Transcription factor RelB">
    <location>
        <begin position="1"/>
        <end position="558"/>
    </location>
</feature>
<feature type="domain" description="RHD" evidence="4">
    <location>
        <begin position="103"/>
        <end position="418"/>
    </location>
</feature>
<feature type="region of interest" description="Disordered" evidence="5">
    <location>
        <begin position="1"/>
        <end position="21"/>
    </location>
</feature>
<feature type="region of interest" description="Leucine-zipper">
    <location>
        <begin position="22"/>
        <end position="50"/>
    </location>
</feature>
<feature type="short sequence motif" description="Nuclear localization signal" evidence="3">
    <location>
        <begin position="387"/>
        <end position="391"/>
    </location>
</feature>
<feature type="short sequence motif" description="Nuclear localization signal" evidence="3">
    <location>
        <begin position="411"/>
        <end position="416"/>
    </location>
</feature>
<feature type="compositionally biased region" description="Basic and acidic residues" evidence="5">
    <location>
        <begin position="1"/>
        <end position="11"/>
    </location>
</feature>
<feature type="modified residue" description="Phosphoserine" evidence="2">
    <location>
        <position position="19"/>
    </location>
</feature>
<feature type="modified residue" description="Phosphothreonine" evidence="6">
    <location>
        <position position="84"/>
    </location>
</feature>
<feature type="modified residue" description="Phosphoserine" evidence="6">
    <location>
        <position position="552"/>
    </location>
</feature>
<feature type="mutagenesis site" description="Strongly reduces transcriptional activity and interaction with NFKB1/p50 and NFKB2/p52." evidence="8">
    <original>S</original>
    <variation>A</variation>
    <variation>E</variation>
    <location>
        <position position="368"/>
    </location>
</feature>
<feature type="sequence conflict" description="In Ref. 1; AAA40041." evidence="12" ref="1">
    <original>D</original>
    <variation>V</variation>
    <location>
        <position position="51"/>
    </location>
</feature>
<feature type="sequence conflict" description="In Ref. 1; AAA40041." evidence="12" ref="1">
    <original>L</original>
    <variation>Q</variation>
    <location>
        <position position="142"/>
    </location>
</feature>
<feature type="strand" evidence="16">
    <location>
        <begin position="95"/>
        <end position="97"/>
    </location>
</feature>
<feature type="strand" evidence="15">
    <location>
        <begin position="104"/>
        <end position="109"/>
    </location>
</feature>
<feature type="strand" evidence="16">
    <location>
        <begin position="113"/>
        <end position="116"/>
    </location>
</feature>
<feature type="helix" evidence="15">
    <location>
        <begin position="121"/>
        <end position="123"/>
    </location>
</feature>
<feature type="strand" evidence="15">
    <location>
        <begin position="132"/>
        <end position="134"/>
    </location>
</feature>
<feature type="strand" evidence="16">
    <location>
        <begin position="137"/>
        <end position="139"/>
    </location>
</feature>
<feature type="strand" evidence="15">
    <location>
        <begin position="145"/>
        <end position="149"/>
    </location>
</feature>
<feature type="strand" evidence="15">
    <location>
        <begin position="156"/>
        <end position="160"/>
    </location>
</feature>
<feature type="strand" evidence="15">
    <location>
        <begin position="165"/>
        <end position="168"/>
    </location>
</feature>
<feature type="strand" evidence="15">
    <location>
        <begin position="173"/>
        <end position="178"/>
    </location>
</feature>
<feature type="strand" evidence="15">
    <location>
        <begin position="182"/>
        <end position="184"/>
    </location>
</feature>
<feature type="strand" evidence="15">
    <location>
        <begin position="186"/>
        <end position="190"/>
    </location>
</feature>
<feature type="turn" evidence="15">
    <location>
        <begin position="192"/>
        <end position="194"/>
    </location>
</feature>
<feature type="strand" evidence="16">
    <location>
        <begin position="197"/>
        <end position="199"/>
    </location>
</feature>
<feature type="strand" evidence="15">
    <location>
        <begin position="204"/>
        <end position="207"/>
    </location>
</feature>
<feature type="turn" evidence="15">
    <location>
        <begin position="210"/>
        <end position="212"/>
    </location>
</feature>
<feature type="helix" evidence="15">
    <location>
        <begin position="213"/>
        <end position="222"/>
    </location>
</feature>
<feature type="strand" evidence="16">
    <location>
        <begin position="234"/>
        <end position="236"/>
    </location>
</feature>
<feature type="strand" evidence="15">
    <location>
        <begin position="241"/>
        <end position="245"/>
    </location>
</feature>
<feature type="strand" evidence="15">
    <location>
        <begin position="250"/>
        <end position="252"/>
    </location>
</feature>
<feature type="strand" evidence="15">
    <location>
        <begin position="255"/>
        <end position="257"/>
    </location>
</feature>
<feature type="strand" evidence="16">
    <location>
        <begin position="270"/>
        <end position="274"/>
    </location>
</feature>
<feature type="helix" evidence="15">
    <location>
        <begin position="276"/>
        <end position="278"/>
    </location>
</feature>
<feature type="strand" evidence="14">
    <location>
        <begin position="279"/>
        <end position="281"/>
    </location>
</feature>
<feature type="strand" evidence="13">
    <location>
        <begin position="283"/>
        <end position="287"/>
    </location>
</feature>
<feature type="strand" evidence="17">
    <location>
        <begin position="289"/>
        <end position="292"/>
    </location>
</feature>
<feature type="strand" evidence="16">
    <location>
        <begin position="297"/>
        <end position="299"/>
    </location>
</feature>
<feature type="strand" evidence="13">
    <location>
        <begin position="301"/>
        <end position="304"/>
    </location>
</feature>
<feature type="helix" evidence="14">
    <location>
        <begin position="308"/>
        <end position="310"/>
    </location>
</feature>
<feature type="strand" evidence="13">
    <location>
        <begin position="314"/>
        <end position="317"/>
    </location>
</feature>
<feature type="strand" evidence="13">
    <location>
        <begin position="320"/>
        <end position="323"/>
    </location>
</feature>
<feature type="helix" evidence="13">
    <location>
        <begin position="328"/>
        <end position="330"/>
    </location>
</feature>
<feature type="turn" evidence="17">
    <location>
        <begin position="333"/>
        <end position="335"/>
    </location>
</feature>
<feature type="strand" evidence="17">
    <location>
        <begin position="336"/>
        <end position="340"/>
    </location>
</feature>
<feature type="strand" evidence="13">
    <location>
        <begin position="353"/>
        <end position="357"/>
    </location>
</feature>
<feature type="turn" evidence="13">
    <location>
        <begin position="362"/>
        <end position="364"/>
    </location>
</feature>
<feature type="strand" evidence="13">
    <location>
        <begin position="371"/>
        <end position="375"/>
    </location>
</feature>
<dbReference type="EMBL" id="M83380">
    <property type="protein sequence ID" value="AAA40041.1"/>
    <property type="molecule type" value="mRNA"/>
</dbReference>
<dbReference type="EMBL" id="AK146932">
    <property type="protein sequence ID" value="BAE27543.1"/>
    <property type="molecule type" value="mRNA"/>
</dbReference>
<dbReference type="EMBL" id="BC019765">
    <property type="protein sequence ID" value="AAH19765.1"/>
    <property type="molecule type" value="mRNA"/>
</dbReference>
<dbReference type="EMBL" id="BC117793">
    <property type="protein sequence ID" value="AAI17794.1"/>
    <property type="molecule type" value="mRNA"/>
</dbReference>
<dbReference type="EMBL" id="S56076">
    <property type="protein sequence ID" value="AAB25493.2"/>
    <property type="molecule type" value="mRNA"/>
</dbReference>
<dbReference type="EMBL" id="S76754">
    <property type="protein sequence ID" value="AAB33259.1"/>
    <property type="molecule type" value="Genomic_DNA"/>
</dbReference>
<dbReference type="CCDS" id="CCDS39799.1"/>
<dbReference type="PIR" id="A42023">
    <property type="entry name" value="A42023"/>
</dbReference>
<dbReference type="PIR" id="I58091">
    <property type="entry name" value="I58091"/>
</dbReference>
<dbReference type="RefSeq" id="NP_001277386.1">
    <property type="nucleotide sequence ID" value="NM_001290457.1"/>
</dbReference>
<dbReference type="RefSeq" id="NP_033072.2">
    <property type="nucleotide sequence ID" value="NM_009046.2"/>
</dbReference>
<dbReference type="PDB" id="1ZK9">
    <property type="method" value="X-ray"/>
    <property type="resolution" value="2.18 A"/>
    <property type="chains" value="A=277-378"/>
</dbReference>
<dbReference type="PDB" id="1ZKA">
    <property type="method" value="X-ray"/>
    <property type="resolution" value="2.20 A"/>
    <property type="chains" value="A=277-378"/>
</dbReference>
<dbReference type="PDB" id="2V2T">
    <property type="method" value="X-ray"/>
    <property type="resolution" value="3.05 A"/>
    <property type="chains" value="A=91-378"/>
</dbReference>
<dbReference type="PDB" id="3DO7">
    <property type="method" value="X-ray"/>
    <property type="resolution" value="3.05 A"/>
    <property type="chains" value="A=88-383"/>
</dbReference>
<dbReference type="PDB" id="3JSS">
    <property type="method" value="X-ray"/>
    <property type="resolution" value="2.60 A"/>
    <property type="chains" value="A=278-378"/>
</dbReference>
<dbReference type="PDB" id="3JUZ">
    <property type="method" value="X-ray"/>
    <property type="resolution" value="2.51 A"/>
    <property type="chains" value="A=278-378"/>
</dbReference>
<dbReference type="PDB" id="3JV0">
    <property type="method" value="X-ray"/>
    <property type="resolution" value="2.65 A"/>
    <property type="chains" value="A=278-378"/>
</dbReference>
<dbReference type="PDB" id="3JV4">
    <property type="method" value="X-ray"/>
    <property type="resolution" value="3.15 A"/>
    <property type="chains" value="A/C/E=278-378"/>
</dbReference>
<dbReference type="PDB" id="3JV6">
    <property type="method" value="X-ray"/>
    <property type="resolution" value="2.78 A"/>
    <property type="chains" value="A/C/E=278-378"/>
</dbReference>
<dbReference type="PDB" id="4JGM">
    <property type="method" value="X-ray"/>
    <property type="resolution" value="3.00 A"/>
    <property type="chains" value="A=277-378"/>
</dbReference>
<dbReference type="PDB" id="4JHB">
    <property type="method" value="X-ray"/>
    <property type="resolution" value="2.44 A"/>
    <property type="chains" value="A=277-378"/>
</dbReference>
<dbReference type="PDBsum" id="1ZK9"/>
<dbReference type="PDBsum" id="1ZKA"/>
<dbReference type="PDBsum" id="2V2T"/>
<dbReference type="PDBsum" id="3DO7"/>
<dbReference type="PDBsum" id="3JSS"/>
<dbReference type="PDBsum" id="3JUZ"/>
<dbReference type="PDBsum" id="3JV0"/>
<dbReference type="PDBsum" id="3JV4"/>
<dbReference type="PDBsum" id="3JV6"/>
<dbReference type="PDBsum" id="4JGM"/>
<dbReference type="PDBsum" id="4JHB"/>
<dbReference type="SMR" id="Q04863"/>
<dbReference type="BioGRID" id="202854">
    <property type="interactions" value="5"/>
</dbReference>
<dbReference type="DIP" id="DIP-39585N"/>
<dbReference type="FunCoup" id="Q04863">
    <property type="interactions" value="556"/>
</dbReference>
<dbReference type="IntAct" id="Q04863">
    <property type="interactions" value="10"/>
</dbReference>
<dbReference type="MINT" id="Q04863"/>
<dbReference type="STRING" id="10090.ENSMUSP00000092355"/>
<dbReference type="GlyGen" id="Q04863">
    <property type="glycosylation" value="1 site"/>
</dbReference>
<dbReference type="iPTMnet" id="Q04863"/>
<dbReference type="PhosphoSitePlus" id="Q04863"/>
<dbReference type="jPOST" id="Q04863"/>
<dbReference type="PaxDb" id="10090-ENSMUSP00000092355"/>
<dbReference type="PeptideAtlas" id="Q04863"/>
<dbReference type="ProteomicsDB" id="253203"/>
<dbReference type="Pumba" id="Q04863"/>
<dbReference type="Antibodypedia" id="3573">
    <property type="antibodies" value="662 antibodies from 43 providers"/>
</dbReference>
<dbReference type="DNASU" id="19698"/>
<dbReference type="Ensembl" id="ENSMUST00000094762.10">
    <property type="protein sequence ID" value="ENSMUSP00000092355.4"/>
    <property type="gene ID" value="ENSMUSG00000002983.19"/>
</dbReference>
<dbReference type="GeneID" id="19698"/>
<dbReference type="KEGG" id="mmu:19698"/>
<dbReference type="UCSC" id="uc012fbg.1">
    <property type="organism name" value="mouse"/>
</dbReference>
<dbReference type="AGR" id="MGI:103289"/>
<dbReference type="CTD" id="5971"/>
<dbReference type="MGI" id="MGI:103289">
    <property type="gene designation" value="Relb"/>
</dbReference>
<dbReference type="VEuPathDB" id="HostDB:ENSMUSG00000002983"/>
<dbReference type="eggNOG" id="ENOG502QV8A">
    <property type="taxonomic scope" value="Eukaryota"/>
</dbReference>
<dbReference type="GeneTree" id="ENSGT00940000160230"/>
<dbReference type="InParanoid" id="Q04863"/>
<dbReference type="OMA" id="NQYREGA"/>
<dbReference type="OrthoDB" id="7881762at2759"/>
<dbReference type="PhylomeDB" id="Q04863"/>
<dbReference type="TreeFam" id="TF325632"/>
<dbReference type="Reactome" id="R-MMU-5607761">
    <property type="pathway name" value="Dectin-1 mediated noncanonical NF-kB signaling"/>
</dbReference>
<dbReference type="Reactome" id="R-MMU-5621575">
    <property type="pathway name" value="CD209 (DC-SIGN) signaling"/>
</dbReference>
<dbReference type="Reactome" id="R-MMU-5676590">
    <property type="pathway name" value="NIK--&gt;noncanonical NF-kB signaling"/>
</dbReference>
<dbReference type="BioGRID-ORCS" id="19698">
    <property type="hits" value="3 hits in 81 CRISPR screens"/>
</dbReference>
<dbReference type="ChiTaRS" id="Relb">
    <property type="organism name" value="mouse"/>
</dbReference>
<dbReference type="EvolutionaryTrace" id="Q04863"/>
<dbReference type="PRO" id="PR:Q04863"/>
<dbReference type="Proteomes" id="UP000000589">
    <property type="component" value="Chromosome 7"/>
</dbReference>
<dbReference type="RNAct" id="Q04863">
    <property type="molecule type" value="protein"/>
</dbReference>
<dbReference type="Bgee" id="ENSMUSG00000002983">
    <property type="expression patterns" value="Expressed in peripheral lymph node and 139 other cell types or tissues"/>
</dbReference>
<dbReference type="ExpressionAtlas" id="Q04863">
    <property type="expression patterns" value="baseline and differential"/>
</dbReference>
<dbReference type="GO" id="GO:0005813">
    <property type="term" value="C:centrosome"/>
    <property type="evidence" value="ECO:0007669"/>
    <property type="project" value="UniProtKB-SubCell"/>
</dbReference>
<dbReference type="GO" id="GO:0000785">
    <property type="term" value="C:chromatin"/>
    <property type="evidence" value="ECO:0007669"/>
    <property type="project" value="Ensembl"/>
</dbReference>
<dbReference type="GO" id="GO:0005829">
    <property type="term" value="C:cytosol"/>
    <property type="evidence" value="ECO:0000314"/>
    <property type="project" value="MGI"/>
</dbReference>
<dbReference type="GO" id="GO:0005654">
    <property type="term" value="C:nucleoplasm"/>
    <property type="evidence" value="ECO:0007669"/>
    <property type="project" value="Ensembl"/>
</dbReference>
<dbReference type="GO" id="GO:0005634">
    <property type="term" value="C:nucleus"/>
    <property type="evidence" value="ECO:0000314"/>
    <property type="project" value="MGI"/>
</dbReference>
<dbReference type="GO" id="GO:0045202">
    <property type="term" value="C:synapse"/>
    <property type="evidence" value="ECO:0000314"/>
    <property type="project" value="SynGO"/>
</dbReference>
<dbReference type="GO" id="GO:0017053">
    <property type="term" value="C:transcription repressor complex"/>
    <property type="evidence" value="ECO:0007669"/>
    <property type="project" value="Ensembl"/>
</dbReference>
<dbReference type="GO" id="GO:0003677">
    <property type="term" value="F:DNA binding"/>
    <property type="evidence" value="ECO:0000314"/>
    <property type="project" value="MGI"/>
</dbReference>
<dbReference type="GO" id="GO:0003700">
    <property type="term" value="F:DNA-binding transcription factor activity"/>
    <property type="evidence" value="ECO:0000314"/>
    <property type="project" value="MGI"/>
</dbReference>
<dbReference type="GO" id="GO:0042802">
    <property type="term" value="F:identical protein binding"/>
    <property type="evidence" value="ECO:0000353"/>
    <property type="project" value="IntAct"/>
</dbReference>
<dbReference type="GO" id="GO:0019901">
    <property type="term" value="F:protein kinase binding"/>
    <property type="evidence" value="ECO:0007669"/>
    <property type="project" value="Ensembl"/>
</dbReference>
<dbReference type="GO" id="GO:0000978">
    <property type="term" value="F:RNA polymerase II cis-regulatory region sequence-specific DNA binding"/>
    <property type="evidence" value="ECO:0000314"/>
    <property type="project" value="UniProtKB"/>
</dbReference>
<dbReference type="GO" id="GO:0019882">
    <property type="term" value="P:antigen processing and presentation"/>
    <property type="evidence" value="ECO:0000315"/>
    <property type="project" value="MGI"/>
</dbReference>
<dbReference type="GO" id="GO:0071470">
    <property type="term" value="P:cellular response to osmotic stress"/>
    <property type="evidence" value="ECO:0007669"/>
    <property type="project" value="Ensembl"/>
</dbReference>
<dbReference type="GO" id="GO:0032922">
    <property type="term" value="P:circadian regulation of gene expression"/>
    <property type="evidence" value="ECO:0000315"/>
    <property type="project" value="UniProtKB"/>
</dbReference>
<dbReference type="GO" id="GO:0043011">
    <property type="term" value="P:myeloid dendritic cell differentiation"/>
    <property type="evidence" value="ECO:0000315"/>
    <property type="project" value="MGI"/>
</dbReference>
<dbReference type="GO" id="GO:0045892">
    <property type="term" value="P:negative regulation of DNA-templated transcription"/>
    <property type="evidence" value="ECO:0000314"/>
    <property type="project" value="UniProtKB"/>
</dbReference>
<dbReference type="GO" id="GO:0032688">
    <property type="term" value="P:negative regulation of interferon-beta production"/>
    <property type="evidence" value="ECO:0007669"/>
    <property type="project" value="Ensembl"/>
</dbReference>
<dbReference type="GO" id="GO:0038061">
    <property type="term" value="P:non-canonical NF-kappaB signal transduction"/>
    <property type="evidence" value="ECO:0000314"/>
    <property type="project" value="MGI"/>
</dbReference>
<dbReference type="GO" id="GO:0045063">
    <property type="term" value="P:T-helper 1 cell differentiation"/>
    <property type="evidence" value="ECO:0000315"/>
    <property type="project" value="MGI"/>
</dbReference>
<dbReference type="GO" id="GO:0042088">
    <property type="term" value="P:T-helper 1 type immune response"/>
    <property type="evidence" value="ECO:0000315"/>
    <property type="project" value="MGI"/>
</dbReference>
<dbReference type="CDD" id="cd01177">
    <property type="entry name" value="IPT_NFkappaB"/>
    <property type="match status" value="1"/>
</dbReference>
<dbReference type="CDD" id="cd07886">
    <property type="entry name" value="RHD-n_RelB"/>
    <property type="match status" value="1"/>
</dbReference>
<dbReference type="FunFam" id="2.60.40.10:FF:000046">
    <property type="entry name" value="Nuclear factor NF-kappa-B p105 subunit"/>
    <property type="match status" value="1"/>
</dbReference>
<dbReference type="FunFam" id="2.60.40.340:FF:000005">
    <property type="entry name" value="RELB proto-oncogene, NF-kB subunit"/>
    <property type="match status" value="1"/>
</dbReference>
<dbReference type="Gene3D" id="2.60.40.10">
    <property type="entry name" value="Immunoglobulins"/>
    <property type="match status" value="1"/>
</dbReference>
<dbReference type="Gene3D" id="2.60.40.340">
    <property type="entry name" value="Rel homology domain (RHD), DNA-binding domain"/>
    <property type="match status" value="1"/>
</dbReference>
<dbReference type="InterPro" id="IPR013783">
    <property type="entry name" value="Ig-like_fold"/>
</dbReference>
<dbReference type="InterPro" id="IPR014756">
    <property type="entry name" value="Ig_E-set"/>
</dbReference>
<dbReference type="InterPro" id="IPR002909">
    <property type="entry name" value="IPT_dom"/>
</dbReference>
<dbReference type="InterPro" id="IPR033926">
    <property type="entry name" value="IPT_NFkappaB"/>
</dbReference>
<dbReference type="InterPro" id="IPR000451">
    <property type="entry name" value="NFkB/Dor"/>
</dbReference>
<dbReference type="InterPro" id="IPR008967">
    <property type="entry name" value="p53-like_TF_DNA-bd_sf"/>
</dbReference>
<dbReference type="InterPro" id="IPR032399">
    <property type="entry name" value="RelB_leu_zip"/>
</dbReference>
<dbReference type="InterPro" id="IPR030496">
    <property type="entry name" value="RelB_RHD_N"/>
</dbReference>
<dbReference type="InterPro" id="IPR032400">
    <property type="entry name" value="RelB_transact"/>
</dbReference>
<dbReference type="InterPro" id="IPR030492">
    <property type="entry name" value="RHD_CS"/>
</dbReference>
<dbReference type="InterPro" id="IPR032397">
    <property type="entry name" value="RHD_dimer"/>
</dbReference>
<dbReference type="InterPro" id="IPR011539">
    <property type="entry name" value="RHD_DNA_bind_dom"/>
</dbReference>
<dbReference type="InterPro" id="IPR037059">
    <property type="entry name" value="RHD_DNA_bind_dom_sf"/>
</dbReference>
<dbReference type="PANTHER" id="PTHR24169">
    <property type="entry name" value="NUCLEAR FACTOR NF-KAPPA-B PROTEIN"/>
    <property type="match status" value="1"/>
</dbReference>
<dbReference type="PANTHER" id="PTHR24169:SF18">
    <property type="entry name" value="TRANSCRIPTION FACTOR RELB"/>
    <property type="match status" value="1"/>
</dbReference>
<dbReference type="Pfam" id="PF16180">
    <property type="entry name" value="RelB_leu_zip"/>
    <property type="match status" value="1"/>
</dbReference>
<dbReference type="Pfam" id="PF16181">
    <property type="entry name" value="RelB_transactiv"/>
    <property type="match status" value="1"/>
</dbReference>
<dbReference type="Pfam" id="PF16179">
    <property type="entry name" value="RHD_dimer"/>
    <property type="match status" value="1"/>
</dbReference>
<dbReference type="Pfam" id="PF00554">
    <property type="entry name" value="RHD_DNA_bind"/>
    <property type="match status" value="1"/>
</dbReference>
<dbReference type="PRINTS" id="PR00057">
    <property type="entry name" value="NFKBTNSCPFCT"/>
</dbReference>
<dbReference type="SMART" id="SM00429">
    <property type="entry name" value="IPT"/>
    <property type="match status" value="1"/>
</dbReference>
<dbReference type="SUPFAM" id="SSF81296">
    <property type="entry name" value="E set domains"/>
    <property type="match status" value="1"/>
</dbReference>
<dbReference type="SUPFAM" id="SSF49417">
    <property type="entry name" value="p53-like transcription factors"/>
    <property type="match status" value="1"/>
</dbReference>
<dbReference type="PROSITE" id="PS01204">
    <property type="entry name" value="REL_1"/>
    <property type="match status" value="1"/>
</dbReference>
<dbReference type="PROSITE" id="PS50254">
    <property type="entry name" value="REL_2"/>
    <property type="match status" value="1"/>
</dbReference>
<protein>
    <recommendedName>
        <fullName>Transcription factor RelB</fullName>
    </recommendedName>
</protein>
<evidence type="ECO:0000250" key="1"/>
<evidence type="ECO:0000250" key="2">
    <source>
        <dbReference type="UniProtKB" id="Q01201"/>
    </source>
</evidence>
<evidence type="ECO:0000255" key="3"/>
<evidence type="ECO:0000255" key="4">
    <source>
        <dbReference type="PROSITE-ProRule" id="PRU00265"/>
    </source>
</evidence>
<evidence type="ECO:0000256" key="5">
    <source>
        <dbReference type="SAM" id="MobiDB-lite"/>
    </source>
</evidence>
<evidence type="ECO:0000269" key="6">
    <source>
    </source>
</evidence>
<evidence type="ECO:0000269" key="7">
    <source>
    </source>
</evidence>
<evidence type="ECO:0000269" key="8">
    <source>
    </source>
</evidence>
<evidence type="ECO:0000269" key="9">
    <source>
    </source>
</evidence>
<evidence type="ECO:0000269" key="10">
    <source>
    </source>
</evidence>
<evidence type="ECO:0000269" key="11">
    <source>
    </source>
</evidence>
<evidence type="ECO:0000305" key="12"/>
<evidence type="ECO:0007829" key="13">
    <source>
        <dbReference type="PDB" id="1ZK9"/>
    </source>
</evidence>
<evidence type="ECO:0007829" key="14">
    <source>
        <dbReference type="PDB" id="1ZKA"/>
    </source>
</evidence>
<evidence type="ECO:0007829" key="15">
    <source>
        <dbReference type="PDB" id="2V2T"/>
    </source>
</evidence>
<evidence type="ECO:0007829" key="16">
    <source>
        <dbReference type="PDB" id="3DO7"/>
    </source>
</evidence>
<evidence type="ECO:0007829" key="17">
    <source>
        <dbReference type="PDB" id="4JHB"/>
    </source>
</evidence>
<proteinExistence type="evidence at protein level"/>
<keyword id="KW-0002">3D-structure</keyword>
<keyword id="KW-0010">Activator</keyword>
<keyword id="KW-0090">Biological rhythms</keyword>
<keyword id="KW-0963">Cytoplasm</keyword>
<keyword id="KW-0206">Cytoskeleton</keyword>
<keyword id="KW-0539">Nucleus</keyword>
<keyword id="KW-0597">Phosphoprotein</keyword>
<keyword id="KW-1185">Reference proteome</keyword>
<keyword id="KW-0678">Repressor</keyword>
<keyword id="KW-0804">Transcription</keyword>
<keyword id="KW-0805">Transcription regulation</keyword>
<accession>Q04863</accession>
<accession>Q8VE46</accession>